<gene>
    <name evidence="1" type="primary">fbp</name>
    <name type="ordered locus">Pnuc_0669</name>
</gene>
<evidence type="ECO:0000255" key="1">
    <source>
        <dbReference type="HAMAP-Rule" id="MF_01855"/>
    </source>
</evidence>
<dbReference type="EC" id="3.1.3.11" evidence="1"/>
<dbReference type="EMBL" id="CP000655">
    <property type="protein sequence ID" value="ABP33887.1"/>
    <property type="molecule type" value="Genomic_DNA"/>
</dbReference>
<dbReference type="RefSeq" id="WP_011902512.1">
    <property type="nucleotide sequence ID" value="NC_009379.1"/>
</dbReference>
<dbReference type="SMR" id="A4SWM3"/>
<dbReference type="GeneID" id="31481026"/>
<dbReference type="KEGG" id="pnu:Pnuc_0669"/>
<dbReference type="eggNOG" id="COG0158">
    <property type="taxonomic scope" value="Bacteria"/>
</dbReference>
<dbReference type="HOGENOM" id="CLU_039977_0_0_4"/>
<dbReference type="UniPathway" id="UPA00138"/>
<dbReference type="Proteomes" id="UP000000231">
    <property type="component" value="Chromosome"/>
</dbReference>
<dbReference type="GO" id="GO:0005829">
    <property type="term" value="C:cytosol"/>
    <property type="evidence" value="ECO:0007669"/>
    <property type="project" value="TreeGrafter"/>
</dbReference>
<dbReference type="GO" id="GO:0042132">
    <property type="term" value="F:fructose 1,6-bisphosphate 1-phosphatase activity"/>
    <property type="evidence" value="ECO:0007669"/>
    <property type="project" value="UniProtKB-UniRule"/>
</dbReference>
<dbReference type="GO" id="GO:0000287">
    <property type="term" value="F:magnesium ion binding"/>
    <property type="evidence" value="ECO:0007669"/>
    <property type="project" value="UniProtKB-UniRule"/>
</dbReference>
<dbReference type="GO" id="GO:0030388">
    <property type="term" value="P:fructose 1,6-bisphosphate metabolic process"/>
    <property type="evidence" value="ECO:0007669"/>
    <property type="project" value="TreeGrafter"/>
</dbReference>
<dbReference type="GO" id="GO:0006002">
    <property type="term" value="P:fructose 6-phosphate metabolic process"/>
    <property type="evidence" value="ECO:0007669"/>
    <property type="project" value="TreeGrafter"/>
</dbReference>
<dbReference type="GO" id="GO:0006000">
    <property type="term" value="P:fructose metabolic process"/>
    <property type="evidence" value="ECO:0007669"/>
    <property type="project" value="TreeGrafter"/>
</dbReference>
<dbReference type="GO" id="GO:0006094">
    <property type="term" value="P:gluconeogenesis"/>
    <property type="evidence" value="ECO:0007669"/>
    <property type="project" value="UniProtKB-UniRule"/>
</dbReference>
<dbReference type="GO" id="GO:0005986">
    <property type="term" value="P:sucrose biosynthetic process"/>
    <property type="evidence" value="ECO:0007669"/>
    <property type="project" value="TreeGrafter"/>
</dbReference>
<dbReference type="CDD" id="cd00354">
    <property type="entry name" value="FBPase"/>
    <property type="match status" value="1"/>
</dbReference>
<dbReference type="FunFam" id="3.40.190.80:FF:000011">
    <property type="entry name" value="Fructose-1,6-bisphosphatase class 1"/>
    <property type="match status" value="1"/>
</dbReference>
<dbReference type="Gene3D" id="3.40.190.80">
    <property type="match status" value="1"/>
</dbReference>
<dbReference type="Gene3D" id="3.30.540.10">
    <property type="entry name" value="Fructose-1,6-Bisphosphatase, subunit A, domain 1"/>
    <property type="match status" value="1"/>
</dbReference>
<dbReference type="HAMAP" id="MF_01855">
    <property type="entry name" value="FBPase_class1"/>
    <property type="match status" value="1"/>
</dbReference>
<dbReference type="InterPro" id="IPR044015">
    <property type="entry name" value="FBPase_C_dom"/>
</dbReference>
<dbReference type="InterPro" id="IPR000146">
    <property type="entry name" value="FBPase_class-1"/>
</dbReference>
<dbReference type="InterPro" id="IPR033391">
    <property type="entry name" value="FBPase_N"/>
</dbReference>
<dbReference type="InterPro" id="IPR028343">
    <property type="entry name" value="FBPtase"/>
</dbReference>
<dbReference type="NCBIfam" id="NF006779">
    <property type="entry name" value="PRK09293.1-3"/>
    <property type="match status" value="1"/>
</dbReference>
<dbReference type="NCBIfam" id="NF006780">
    <property type="entry name" value="PRK09293.1-4"/>
    <property type="match status" value="1"/>
</dbReference>
<dbReference type="PANTHER" id="PTHR11556">
    <property type="entry name" value="FRUCTOSE-1,6-BISPHOSPHATASE-RELATED"/>
    <property type="match status" value="1"/>
</dbReference>
<dbReference type="PANTHER" id="PTHR11556:SF35">
    <property type="entry name" value="SEDOHEPTULOSE-1,7-BISPHOSPHATASE, CHLOROPLASTIC"/>
    <property type="match status" value="1"/>
</dbReference>
<dbReference type="Pfam" id="PF00316">
    <property type="entry name" value="FBPase"/>
    <property type="match status" value="1"/>
</dbReference>
<dbReference type="Pfam" id="PF18913">
    <property type="entry name" value="FBPase_C"/>
    <property type="match status" value="1"/>
</dbReference>
<dbReference type="PIRSF" id="PIRSF500210">
    <property type="entry name" value="FBPtase"/>
    <property type="match status" value="1"/>
</dbReference>
<dbReference type="PIRSF" id="PIRSF000904">
    <property type="entry name" value="FBPtase_SBPase"/>
    <property type="match status" value="1"/>
</dbReference>
<dbReference type="PRINTS" id="PR00115">
    <property type="entry name" value="F16BPHPHTASE"/>
</dbReference>
<dbReference type="SUPFAM" id="SSF56655">
    <property type="entry name" value="Carbohydrate phosphatase"/>
    <property type="match status" value="1"/>
</dbReference>
<proteinExistence type="inferred from homology"/>
<comment type="catalytic activity">
    <reaction evidence="1">
        <text>beta-D-fructose 1,6-bisphosphate + H2O = beta-D-fructose 6-phosphate + phosphate</text>
        <dbReference type="Rhea" id="RHEA:11064"/>
        <dbReference type="ChEBI" id="CHEBI:15377"/>
        <dbReference type="ChEBI" id="CHEBI:32966"/>
        <dbReference type="ChEBI" id="CHEBI:43474"/>
        <dbReference type="ChEBI" id="CHEBI:57634"/>
        <dbReference type="EC" id="3.1.3.11"/>
    </reaction>
</comment>
<comment type="cofactor">
    <cofactor evidence="1">
        <name>Mg(2+)</name>
        <dbReference type="ChEBI" id="CHEBI:18420"/>
    </cofactor>
    <text evidence="1">Binds 2 magnesium ions per subunit.</text>
</comment>
<comment type="pathway">
    <text evidence="1">Carbohydrate biosynthesis; gluconeogenesis.</text>
</comment>
<comment type="subunit">
    <text evidence="1">Homotetramer.</text>
</comment>
<comment type="subcellular location">
    <subcellularLocation>
        <location evidence="1">Cytoplasm</location>
    </subcellularLocation>
</comment>
<comment type="similarity">
    <text evidence="1">Belongs to the FBPase class 1 family.</text>
</comment>
<keyword id="KW-0119">Carbohydrate metabolism</keyword>
<keyword id="KW-0963">Cytoplasm</keyword>
<keyword id="KW-0378">Hydrolase</keyword>
<keyword id="KW-0460">Magnesium</keyword>
<keyword id="KW-0479">Metal-binding</keyword>
<keyword id="KW-1185">Reference proteome</keyword>
<reference key="1">
    <citation type="journal article" date="2012" name="Stand. Genomic Sci.">
        <title>Complete genome sequence of Polynucleobacter necessarius subsp. asymbioticus type strain (QLW-P1DMWA-1(T)).</title>
        <authorList>
            <person name="Meincke L."/>
            <person name="Copeland A."/>
            <person name="Lapidus A."/>
            <person name="Lucas S."/>
            <person name="Berry K.W."/>
            <person name="Del Rio T.G."/>
            <person name="Hammon N."/>
            <person name="Dalin E."/>
            <person name="Tice H."/>
            <person name="Pitluck S."/>
            <person name="Richardson P."/>
            <person name="Bruce D."/>
            <person name="Goodwin L."/>
            <person name="Han C."/>
            <person name="Tapia R."/>
            <person name="Detter J.C."/>
            <person name="Schmutz J."/>
            <person name="Brettin T."/>
            <person name="Larimer F."/>
            <person name="Land M."/>
            <person name="Hauser L."/>
            <person name="Kyrpides N.C."/>
            <person name="Ivanova N."/>
            <person name="Goker M."/>
            <person name="Woyke T."/>
            <person name="Wu Q.L."/>
            <person name="Pockl M."/>
            <person name="Hahn M.W."/>
            <person name="Klenk H.P."/>
        </authorList>
    </citation>
    <scope>NUCLEOTIDE SEQUENCE [LARGE SCALE GENOMIC DNA]</scope>
    <source>
        <strain>DSM 18221 / CIP 109841 / QLW-P1DMWA-1</strain>
    </source>
</reference>
<protein>
    <recommendedName>
        <fullName evidence="1">Fructose-1,6-bisphosphatase class 1</fullName>
        <shortName evidence="1">FBPase class 1</shortName>
        <ecNumber evidence="1">3.1.3.11</ecNumber>
    </recommendedName>
    <alternativeName>
        <fullName evidence="1">D-fructose-1,6-bisphosphate 1-phosphohydrolase class 1</fullName>
    </alternativeName>
</protein>
<accession>A4SWM3</accession>
<sequence>MSSSTHTNFKQYLAAVKPQGEAAPAGLQELLIAVTQTCSTLSHEVAQGALIGLLGSAGTGNVQGEVQQKLDIIANDLLIEGVQGCKSLAGLASEEMELPVPVQGTGDYLLLFDPLDGSSNIDVNVSIGTIFSILKKQDPQAPLQTADFLLSGRHQVAAGYVVYGPQTTMALTLGDGVVMFTLNKVTGEFLLIKDAVTIAHSTKEFAINMSNMRHWADPVKRYVEECLAGVGGAREKDFNMRWIASMVADVHRVLSRGGVFMYPWDQREPHKPGKLRLMYEANPMSFLVEQAGGASTNGTQLIMDLQPTDLHERVSVMLGSKEEIDRLQHYHSSLA</sequence>
<organism>
    <name type="scientific">Polynucleobacter asymbioticus (strain DSM 18221 / CIP 109841 / QLW-P1DMWA-1)</name>
    <name type="common">Polynucleobacter necessarius subsp. asymbioticus</name>
    <dbReference type="NCBI Taxonomy" id="312153"/>
    <lineage>
        <taxon>Bacteria</taxon>
        <taxon>Pseudomonadati</taxon>
        <taxon>Pseudomonadota</taxon>
        <taxon>Betaproteobacteria</taxon>
        <taxon>Burkholderiales</taxon>
        <taxon>Burkholderiaceae</taxon>
        <taxon>Polynucleobacter</taxon>
    </lineage>
</organism>
<feature type="chain" id="PRO_0000364632" description="Fructose-1,6-bisphosphatase class 1">
    <location>
        <begin position="1"/>
        <end position="335"/>
    </location>
</feature>
<feature type="binding site" evidence="1">
    <location>
        <position position="94"/>
    </location>
    <ligand>
        <name>Mg(2+)</name>
        <dbReference type="ChEBI" id="CHEBI:18420"/>
        <label>1</label>
    </ligand>
</feature>
<feature type="binding site" evidence="1">
    <location>
        <position position="113"/>
    </location>
    <ligand>
        <name>Mg(2+)</name>
        <dbReference type="ChEBI" id="CHEBI:18420"/>
        <label>1</label>
    </ligand>
</feature>
<feature type="binding site" evidence="1">
    <location>
        <position position="113"/>
    </location>
    <ligand>
        <name>Mg(2+)</name>
        <dbReference type="ChEBI" id="CHEBI:18420"/>
        <label>2</label>
    </ligand>
</feature>
<feature type="binding site" evidence="1">
    <location>
        <position position="115"/>
    </location>
    <ligand>
        <name>Mg(2+)</name>
        <dbReference type="ChEBI" id="CHEBI:18420"/>
        <label>1</label>
    </ligand>
</feature>
<feature type="binding site" evidence="1">
    <location>
        <begin position="116"/>
        <end position="119"/>
    </location>
    <ligand>
        <name>substrate</name>
    </ligand>
</feature>
<feature type="binding site" evidence="1">
    <location>
        <position position="116"/>
    </location>
    <ligand>
        <name>Mg(2+)</name>
        <dbReference type="ChEBI" id="CHEBI:18420"/>
        <label>2</label>
    </ligand>
</feature>
<feature type="binding site" evidence="1">
    <location>
        <position position="208"/>
    </location>
    <ligand>
        <name>substrate</name>
    </ligand>
</feature>
<feature type="binding site" evidence="1">
    <location>
        <position position="274"/>
    </location>
    <ligand>
        <name>substrate</name>
    </ligand>
</feature>
<feature type="binding site" evidence="1">
    <location>
        <position position="280"/>
    </location>
    <ligand>
        <name>Mg(2+)</name>
        <dbReference type="ChEBI" id="CHEBI:18420"/>
        <label>2</label>
    </ligand>
</feature>
<name>F16PA_POLAQ</name>